<dbReference type="EMBL" id="AJ278865">
    <property type="protein sequence ID" value="CAC19014.1"/>
    <property type="molecule type" value="mRNA"/>
</dbReference>
<dbReference type="EMBL" id="AF254868">
    <property type="protein sequence ID" value="AAG42685.1"/>
    <property type="molecule type" value="mRNA"/>
</dbReference>
<dbReference type="EMBL" id="Z93015">
    <property type="status" value="NOT_ANNOTATED_CDS"/>
    <property type="molecule type" value="Genomic_DNA"/>
</dbReference>
<dbReference type="EMBL" id="CH471141">
    <property type="protein sequence ID" value="EAW59399.1"/>
    <property type="molecule type" value="Genomic_DNA"/>
</dbReference>
<dbReference type="EMBL" id="CH471141">
    <property type="protein sequence ID" value="EAW59401.1"/>
    <property type="molecule type" value="Genomic_DNA"/>
</dbReference>
<dbReference type="EMBL" id="BC112242">
    <property type="protein sequence ID" value="AAI12243.1"/>
    <property type="molecule type" value="mRNA"/>
</dbReference>
<dbReference type="CCDS" id="CCDS14256.2"/>
<dbReference type="RefSeq" id="NP_001365406.2">
    <property type="nucleotide sequence ID" value="NM_001378477.3"/>
</dbReference>
<dbReference type="RefSeq" id="NP_072089.2">
    <property type="nucleotide sequence ID" value="NM_022567.3"/>
</dbReference>
<dbReference type="RefSeq" id="XP_016885198.1">
    <property type="nucleotide sequence ID" value="XM_017029709.1"/>
</dbReference>
<dbReference type="SMR" id="Q9GZU5"/>
<dbReference type="BioGRID" id="121934">
    <property type="interactions" value="53"/>
</dbReference>
<dbReference type="FunCoup" id="Q9GZU5">
    <property type="interactions" value="37"/>
</dbReference>
<dbReference type="IntAct" id="Q9GZU5">
    <property type="interactions" value="15"/>
</dbReference>
<dbReference type="STRING" id="9606.ENSP00000340328"/>
<dbReference type="GlyCosmos" id="Q9GZU5">
    <property type="glycosylation" value="6 sites, No reported glycans"/>
</dbReference>
<dbReference type="GlyGen" id="Q9GZU5">
    <property type="glycosylation" value="6 sites"/>
</dbReference>
<dbReference type="PhosphoSitePlus" id="Q9GZU5"/>
<dbReference type="BioMuta" id="NYX"/>
<dbReference type="DMDM" id="23396778"/>
<dbReference type="MassIVE" id="Q9GZU5"/>
<dbReference type="PaxDb" id="9606-ENSP00000340328"/>
<dbReference type="PeptideAtlas" id="Q9GZU5"/>
<dbReference type="ProteomicsDB" id="80149"/>
<dbReference type="Antibodypedia" id="55948">
    <property type="antibodies" value="93 antibodies from 16 providers"/>
</dbReference>
<dbReference type="DNASU" id="60506"/>
<dbReference type="Ensembl" id="ENST00000342595.3">
    <property type="protein sequence ID" value="ENSP00000340328.3"/>
    <property type="gene ID" value="ENSG00000188937.7"/>
</dbReference>
<dbReference type="Ensembl" id="ENST00000378220.3">
    <property type="protein sequence ID" value="ENSP00000367465.2"/>
    <property type="gene ID" value="ENSG00000188937.7"/>
</dbReference>
<dbReference type="GeneID" id="60506"/>
<dbReference type="KEGG" id="hsa:60506"/>
<dbReference type="MANE-Select" id="ENST00000378220.3">
    <property type="protein sequence ID" value="ENSP00000367465.2"/>
    <property type="RefSeq nucleotide sequence ID" value="NM_001378477.3"/>
    <property type="RefSeq protein sequence ID" value="NP_001365406.2"/>
</dbReference>
<dbReference type="UCSC" id="uc004dfh.3">
    <property type="organism name" value="human"/>
</dbReference>
<dbReference type="AGR" id="HGNC:8082"/>
<dbReference type="CTD" id="60506"/>
<dbReference type="DisGeNET" id="60506"/>
<dbReference type="GeneCards" id="NYX"/>
<dbReference type="GeneReviews" id="NYX"/>
<dbReference type="HGNC" id="HGNC:8082">
    <property type="gene designation" value="NYX"/>
</dbReference>
<dbReference type="HPA" id="ENSG00000188937">
    <property type="expression patterns" value="Not detected"/>
</dbReference>
<dbReference type="MalaCards" id="NYX"/>
<dbReference type="MIM" id="300278">
    <property type="type" value="gene"/>
</dbReference>
<dbReference type="MIM" id="310500">
    <property type="type" value="phenotype"/>
</dbReference>
<dbReference type="neXtProt" id="NX_Q9GZU5"/>
<dbReference type="OpenTargets" id="ENSG00000188937"/>
<dbReference type="Orphanet" id="215">
    <property type="disease" value="Congenital stationary night blindness"/>
</dbReference>
<dbReference type="PharmGKB" id="PA31871"/>
<dbReference type="VEuPathDB" id="HostDB:ENSG00000188937"/>
<dbReference type="eggNOG" id="KOG4237">
    <property type="taxonomic scope" value="Eukaryota"/>
</dbReference>
<dbReference type="GeneTree" id="ENSGT00940000160782"/>
<dbReference type="HOGENOM" id="CLU_000288_18_6_1"/>
<dbReference type="InParanoid" id="Q9GZU5"/>
<dbReference type="OrthoDB" id="2015831at2759"/>
<dbReference type="PAN-GO" id="Q9GZU5">
    <property type="GO annotations" value="2 GO annotations based on evolutionary models"/>
</dbReference>
<dbReference type="PhylomeDB" id="Q9GZU5"/>
<dbReference type="TreeFam" id="TF337463"/>
<dbReference type="PathwayCommons" id="Q9GZU5"/>
<dbReference type="SignaLink" id="Q9GZU5"/>
<dbReference type="BioGRID-ORCS" id="60506">
    <property type="hits" value="10 hits in 765 CRISPR screens"/>
</dbReference>
<dbReference type="GeneWiki" id="Nyctalopin"/>
<dbReference type="GenomeRNAi" id="60506"/>
<dbReference type="Pharos" id="Q9GZU5">
    <property type="development level" value="Tbio"/>
</dbReference>
<dbReference type="PRO" id="PR:Q9GZU5"/>
<dbReference type="Proteomes" id="UP000005640">
    <property type="component" value="Chromosome X"/>
</dbReference>
<dbReference type="RNAct" id="Q9GZU5">
    <property type="molecule type" value="protein"/>
</dbReference>
<dbReference type="Bgee" id="ENSG00000188937">
    <property type="expression patterns" value="Expressed in primordial germ cell in gonad and 15 other cell types or tissues"/>
</dbReference>
<dbReference type="GO" id="GO:0031012">
    <property type="term" value="C:extracellular matrix"/>
    <property type="evidence" value="ECO:0000318"/>
    <property type="project" value="GO_Central"/>
</dbReference>
<dbReference type="GO" id="GO:0005615">
    <property type="term" value="C:extracellular space"/>
    <property type="evidence" value="ECO:0000318"/>
    <property type="project" value="GO_Central"/>
</dbReference>
<dbReference type="GO" id="GO:0007601">
    <property type="term" value="P:visual perception"/>
    <property type="evidence" value="ECO:0007669"/>
    <property type="project" value="UniProtKB-KW"/>
</dbReference>
<dbReference type="FunFam" id="3.80.10.10:FF:000172">
    <property type="entry name" value="Nyctalopin"/>
    <property type="match status" value="1"/>
</dbReference>
<dbReference type="FunFam" id="3.80.10.10:FF:000258">
    <property type="entry name" value="Nyctalopin"/>
    <property type="match status" value="1"/>
</dbReference>
<dbReference type="Gene3D" id="3.80.10.10">
    <property type="entry name" value="Ribonuclease Inhibitor"/>
    <property type="match status" value="2"/>
</dbReference>
<dbReference type="InterPro" id="IPR000483">
    <property type="entry name" value="Cys-rich_flank_reg_C"/>
</dbReference>
<dbReference type="InterPro" id="IPR001611">
    <property type="entry name" value="Leu-rich_rpt"/>
</dbReference>
<dbReference type="InterPro" id="IPR003591">
    <property type="entry name" value="Leu-rich_rpt_typical-subtyp"/>
</dbReference>
<dbReference type="InterPro" id="IPR032675">
    <property type="entry name" value="LRR_dom_sf"/>
</dbReference>
<dbReference type="InterPro" id="IPR050541">
    <property type="entry name" value="LRR_TM_domain-containing"/>
</dbReference>
<dbReference type="PANTHER" id="PTHR24369">
    <property type="entry name" value="ANTIGEN BSP, PUTATIVE-RELATED"/>
    <property type="match status" value="1"/>
</dbReference>
<dbReference type="PANTHER" id="PTHR24369:SF210">
    <property type="entry name" value="CHAOPTIN-RELATED"/>
    <property type="match status" value="1"/>
</dbReference>
<dbReference type="Pfam" id="PF13855">
    <property type="entry name" value="LRR_8"/>
    <property type="match status" value="2"/>
</dbReference>
<dbReference type="SMART" id="SM00369">
    <property type="entry name" value="LRR_TYP"/>
    <property type="match status" value="9"/>
</dbReference>
<dbReference type="SMART" id="SM00082">
    <property type="entry name" value="LRRCT"/>
    <property type="match status" value="1"/>
</dbReference>
<dbReference type="SUPFAM" id="SSF52058">
    <property type="entry name" value="L domain-like"/>
    <property type="match status" value="1"/>
</dbReference>
<organism>
    <name type="scientific">Homo sapiens</name>
    <name type="common">Human</name>
    <dbReference type="NCBI Taxonomy" id="9606"/>
    <lineage>
        <taxon>Eukaryota</taxon>
        <taxon>Metazoa</taxon>
        <taxon>Chordata</taxon>
        <taxon>Craniata</taxon>
        <taxon>Vertebrata</taxon>
        <taxon>Euteleostomi</taxon>
        <taxon>Mammalia</taxon>
        <taxon>Eutheria</taxon>
        <taxon>Euarchontoglires</taxon>
        <taxon>Primates</taxon>
        <taxon>Haplorrhini</taxon>
        <taxon>Catarrhini</taxon>
        <taxon>Hominidae</taxon>
        <taxon>Homo</taxon>
    </lineage>
</organism>
<gene>
    <name type="primary">NYX</name>
    <name type="synonym">CLRP</name>
</gene>
<protein>
    <recommendedName>
        <fullName>Nyctalopin</fullName>
    </recommendedName>
</protein>
<proteinExistence type="evidence at protein level"/>
<name>NYX_HUMAN</name>
<comment type="interaction">
    <interactant intactId="EBI-12744849">
        <id>Q9GZU5</id>
    </interactant>
    <interactant intactId="EBI-1055254">
        <id>Q8WXH2</id>
        <label>JPH3</label>
    </interactant>
    <organismsDiffer>false</organismsDiffer>
    <experiments>3</experiments>
</comment>
<comment type="interaction">
    <interactant intactId="EBI-12744849">
        <id>Q9GZU5</id>
    </interactant>
    <interactant intactId="EBI-743526">
        <id>P38159</id>
        <label>RBMX</label>
    </interactant>
    <organismsDiffer>false</organismsDiffer>
    <experiments>3</experiments>
</comment>
<comment type="subcellular location">
    <subcellularLocation>
        <location evidence="1">Secreted</location>
        <location evidence="1">Extracellular space</location>
        <location evidence="1">Extracellular matrix</location>
    </subcellularLocation>
</comment>
<comment type="tissue specificity">
    <text evidence="3 4">Expressed in kidney and retina. Also at low levels in brain, testis and muscle. Within the retina, expressed in the inner segment of photoreceptors, outer and inner nuclear layers and the ganglion cell layer.</text>
</comment>
<comment type="disease" evidence="3 4">
    <disease id="DI-00375">
        <name>Night blindness, congenital stationary, 1A</name>
        <acronym>CSNB1A</acronym>
        <description>A non-progressive retinal disorder characterized by impaired night vision. Congenital stationary night blindness type 1A is characterized by impaired scotopic vision, myopia, hyperopia, nystagmus and reduced visual acuity.</description>
        <dbReference type="MIM" id="310500"/>
    </disease>
    <text>The disease is caused by variants affecting the gene represented in this entry.</text>
</comment>
<comment type="similarity">
    <text evidence="5">Belongs to the small leucine-rich proteoglycan (SLRP) family. SLRP class IV subfamily.</text>
</comment>
<feature type="signal peptide" evidence="2">
    <location>
        <begin position="1"/>
        <end position="18"/>
    </location>
</feature>
<feature type="chain" id="PRO_0000032776" description="Nyctalopin">
    <location>
        <begin position="19"/>
        <end position="476"/>
    </location>
</feature>
<feature type="repeat" description="LRR 1" evidence="2">
    <location>
        <begin position="60"/>
        <end position="84"/>
    </location>
</feature>
<feature type="repeat" description="LRR 2" evidence="2">
    <location>
        <begin position="85"/>
        <end position="108"/>
    </location>
</feature>
<feature type="repeat" description="LRR 3" evidence="2">
    <location>
        <begin position="110"/>
        <end position="133"/>
    </location>
</feature>
<feature type="repeat" description="LRR 4" evidence="2">
    <location>
        <begin position="134"/>
        <end position="157"/>
    </location>
</feature>
<feature type="repeat" description="LRR 5" evidence="2">
    <location>
        <begin position="159"/>
        <end position="181"/>
    </location>
</feature>
<feature type="repeat" description="LRR 6" evidence="2">
    <location>
        <begin position="182"/>
        <end position="204"/>
    </location>
</feature>
<feature type="repeat" description="LRR 7" evidence="2">
    <location>
        <begin position="205"/>
        <end position="228"/>
    </location>
</feature>
<feature type="repeat" description="LRR 8" evidence="2">
    <location>
        <begin position="229"/>
        <end position="252"/>
    </location>
</feature>
<feature type="repeat" description="LRR 9" evidence="2">
    <location>
        <begin position="254"/>
        <end position="276"/>
    </location>
</feature>
<feature type="repeat" description="LRR 10" evidence="2">
    <location>
        <begin position="277"/>
        <end position="300"/>
    </location>
</feature>
<feature type="repeat" description="LRR 11" evidence="2">
    <location>
        <begin position="302"/>
        <end position="324"/>
    </location>
</feature>
<feature type="domain" description="LRRCT" evidence="2">
    <location>
        <begin position="336"/>
        <end position="387"/>
    </location>
</feature>
<feature type="glycosylation site" description="N-linked (GlcNAc...) asparagine" evidence="2">
    <location>
        <position position="92"/>
    </location>
</feature>
<feature type="glycosylation site" description="N-linked (GlcNAc...) asparagine" evidence="2">
    <location>
        <position position="178"/>
    </location>
</feature>
<feature type="glycosylation site" description="N-linked (GlcNAc...) asparagine" evidence="2">
    <location>
        <position position="295"/>
    </location>
</feature>
<feature type="glycosylation site" description="N-linked (GlcNAc...) asparagine" evidence="2">
    <location>
        <position position="388"/>
    </location>
</feature>
<feature type="glycosylation site" description="N-linked (GlcNAc...) asparagine" evidence="2">
    <location>
        <position position="427"/>
    </location>
</feature>
<feature type="glycosylation site" description="N-linked (GlcNAc...) asparagine" evidence="2">
    <location>
        <position position="434"/>
    </location>
</feature>
<feature type="sequence variant" id="VAR_014084" description="In CSNB1A." evidence="3">
    <location>
        <begin position="24"/>
        <end position="31"/>
    </location>
</feature>
<feature type="sequence variant" id="VAR_013867" description="In CSNB1A; dbSNP:rs62637020." evidence="4">
    <original>C</original>
    <variation>S</variation>
    <location>
        <position position="26"/>
    </location>
</feature>
<feature type="sequence variant" id="VAR_014085" description="In CSNB1A." evidence="4">
    <location>
        <position position="96"/>
    </location>
</feature>
<feature type="sequence variant" id="VAR_014086" description="In CSNB1A." evidence="4">
    <location>
        <begin position="109"/>
        <end position="113"/>
    </location>
</feature>
<feature type="sequence variant" id="VAR_013868" description="In CSNB1A; dbSNP:rs62637023." evidence="4">
    <original>A</original>
    <variation>P</variation>
    <location>
        <position position="138"/>
    </location>
</feature>
<feature type="sequence variant" id="VAR_013869" description="In CSNB1A; dbSNP:rs62637024." evidence="3">
    <original>P</original>
    <variation>L</variation>
    <location>
        <position position="146"/>
    </location>
</feature>
<feature type="sequence variant" id="VAR_014087" description="In CSNB1A.">
    <original>L</original>
    <variation>LSVPERLL</variation>
    <location>
        <position position="150"/>
    </location>
</feature>
<feature type="sequence variant" id="VAR_013870" description="In CSNB1A; dbSNP:rs62637025." evidence="4">
    <original>P</original>
    <variation>R</variation>
    <location>
        <position position="170"/>
    </location>
</feature>
<feature type="sequence variant" id="VAR_013871" description="In CSNB1A; dbSNP:rs62637026." evidence="3">
    <original>L</original>
    <variation>P</variation>
    <location>
        <position position="179"/>
    </location>
</feature>
<feature type="sequence variant" id="VAR_013872" description="In CSNB1A; requires 2 nucleotide substitutions; dbSNP:rs62637027." evidence="4">
    <original>A</original>
    <variation>K</variation>
    <location>
        <position position="182"/>
    </location>
</feature>
<feature type="sequence variant" id="VAR_014088" description="In CSNB1A.">
    <original>R</original>
    <variation>RLLR</variation>
    <location>
        <position position="202"/>
    </location>
</feature>
<feature type="sequence variant" id="VAR_014089" description="In CSNB1A.">
    <original>R</original>
    <variation>RCLR</variation>
    <location>
        <position position="204"/>
    </location>
</feature>
<feature type="sequence variant" id="VAR_013873" description="In CSNB1A; dbSNP:rs62637028." evidence="3">
    <original>L</original>
    <variation>Q</variation>
    <location>
        <position position="208"/>
    </location>
</feature>
<feature type="sequence variant" id="VAR_013874" description="In CSNB1A." evidence="3">
    <original>N</original>
    <variation>S</variation>
    <location>
        <position position="211"/>
    </location>
</feature>
<feature type="sequence variant" id="VAR_013875" description="In CSNB1A; dbSNP:rs62637030." evidence="3">
    <original>L</original>
    <variation>P</variation>
    <location>
        <position position="227"/>
    </location>
</feature>
<feature type="sequence variant" id="VAR_014090" description="In CSNB1A." evidence="4">
    <location>
        <begin position="238"/>
        <end position="241"/>
    </location>
</feature>
<feature type="sequence variant" id="VAR_013876" description="In CSNB1A; dbSNP:rs62637032." evidence="3">
    <original>N</original>
    <variation>K</variation>
    <location>
        <position position="259"/>
    </location>
</feature>
<feature type="sequence variant" id="VAR_013877" description="In CSNB1A; dbSNP:rs62637033." evidence="3">
    <original>L</original>
    <variation>P</variation>
    <location>
        <position position="280"/>
    </location>
</feature>
<feature type="sequence variant" id="VAR_013878" description="In CSNB1A; dbSNP:rs62637034." evidence="3">
    <original>F</original>
    <variation>S</variation>
    <location>
        <position position="293"/>
    </location>
</feature>
<feature type="sequence variant" id="VAR_013879" description="In CSNB1A." evidence="4">
    <original>L</original>
    <variation>P</variation>
    <location>
        <position position="302"/>
    </location>
</feature>
<feature type="sequence variant" id="VAR_013880" description="In CSNB1A; dbSNP:rs62637035." evidence="4">
    <original>N</original>
    <variation>S</variation>
    <location>
        <position position="307"/>
    </location>
</feature>
<feature type="sequence variant" id="VAR_013881" description="In CSNB1A; dbSNP:rs62637036." evidence="4">
    <original>L</original>
    <variation>P</variation>
    <location>
        <position position="342"/>
    </location>
</feature>
<feature type="sequence variant" id="VAR_013882" description="In CSNB1A; dbSNP:rs62637038." evidence="4">
    <original>G</original>
    <variation>V</variation>
    <location>
        <position position="365"/>
    </location>
</feature>
<feature type="sequence variant" id="VAR_052020" description="In dbSNP:rs34169326.">
    <original>A</original>
    <variation>G</variation>
    <location>
        <position position="401"/>
    </location>
</feature>
<keyword id="KW-1014">Congenital stationary night blindness</keyword>
<keyword id="KW-0225">Disease variant</keyword>
<keyword id="KW-0272">Extracellular matrix</keyword>
<keyword id="KW-0325">Glycoprotein</keyword>
<keyword id="KW-0433">Leucine-rich repeat</keyword>
<keyword id="KW-0654">Proteoglycan</keyword>
<keyword id="KW-1267">Proteomics identification</keyword>
<keyword id="KW-1185">Reference proteome</keyword>
<keyword id="KW-0677">Repeat</keyword>
<keyword id="KW-0964">Secreted</keyword>
<keyword id="KW-0716">Sensory transduction</keyword>
<keyword id="KW-0732">Signal</keyword>
<keyword id="KW-0844">Vision</keyword>
<sequence length="476" mass="51470">MLVLLLHAVVLGLPSAWAVGACARACPAACACSTVERGCSVRCDRAGLLRVPAELPCEAVSIDLDRNGLRFLGERAFGTLPSLRRLSLRHNNLSFITPGAFKGLPRLAELRLAHNGDLRYLHARTFAALSRLRRLDLAACRLFSVPERLLAELPALRELAAFDNLFRRVPGALRGLANLTHAHLERGRIEAVASSSLQGLRRLRSLSLQANRVRAVHAGAFGDCGVLEHLLLNDNLLAELPADAFRGLRRLRTLNLGGNALDRVARAWFADLAELELLYLDRNSIAFVEEGAFQNLSGLLALHLNGNRLTVLAWVAFQPGFFLGRLFLFRNPWCCDCRLEWLRDWMEGSGRVTDVPCASPGSVAGLDLSQVTFGRSSDGLCVDPEELNLTTSSPGPSPEPAATTVSRFSSLLSKLLAPRVPVEEAANTTGGLANASLSDSLSSRGVGGAGRQPWFLLASCLLPSVAQHVVFGLQMD</sequence>
<reference key="1">
    <citation type="journal article" date="2000" name="Nat. Genet.">
        <title>The complete form of X-linked congenital stationary night blindness is caused by mutations in a gene encoding a leucine-rich repeat protein.</title>
        <authorList>
            <person name="Pusch C.M."/>
            <person name="Zeitz C."/>
            <person name="Brandau O."/>
            <person name="Pesch K."/>
            <person name="Achatz H."/>
            <person name="Feil S."/>
            <person name="Scharfe C."/>
            <person name="Maurer J."/>
            <person name="Jacobi F.K."/>
            <person name="Pinckers A."/>
            <person name="Andreasson S."/>
            <person name="Hardcastle A."/>
            <person name="Wissinger B."/>
            <person name="Berger W."/>
            <person name="Meindl A."/>
        </authorList>
    </citation>
    <scope>NUCLEOTIDE SEQUENCE [MRNA]</scope>
    <scope>TISSUE SPECIFICITY</scope>
    <scope>VARIANTS CSNB1A SER-26; ILE-96 DEL; 109-GLU--ALA-113 DEL; PRO-138; ARG-170; LYS-182; LEU-LEU-ARG-207 INS; 238-ALA--PRO-241 DEL; PRO-302; SER-307; PRO-342 AND VAL-365</scope>
</reference>
<reference key="2">
    <citation type="journal article" date="2000" name="Nat. Genet.">
        <title>Mutations in NYX, encoding the leucine-rich proteoglycan nyctalopin, cause X-linked complete congenital stationary night blindness.</title>
        <authorList>
            <person name="Bech-Hansen N.T."/>
            <person name="Naylor M.J."/>
            <person name="Maybaum T.A."/>
            <person name="Sparkes R.L."/>
            <person name="Koop B."/>
            <person name="Birch D.G."/>
            <person name="Bergen A.A.B."/>
            <person name="Prinsen C.F.M."/>
            <person name="Polomeno R.C."/>
            <person name="Gal A."/>
            <person name="Drack A.V."/>
            <person name="Musarella M.A."/>
            <person name="Jacobson S.G."/>
            <person name="Young R.S.L."/>
            <person name="Weleber R.G."/>
        </authorList>
    </citation>
    <scope>NUCLEOTIDE SEQUENCE [MRNA]</scope>
    <scope>TISSUE SPECIFICITY</scope>
    <scope>VARIANTS CSNB1A 24-ARG--ALA-31 DEL; LEU-146; SER-VAL-PRO-GLU-ARG-LEU-LEU-155 INS; PRO-179; LEU-LEU-ARG-207 INS; CYS-LEU-ARG-209 INS; GLN-208; SER-211; PRO-227; LYS-259; PRO-280 AND SER-293</scope>
</reference>
<reference key="3">
    <citation type="journal article" date="2005" name="Nature">
        <title>The DNA sequence of the human X chromosome.</title>
        <authorList>
            <person name="Ross M.T."/>
            <person name="Grafham D.V."/>
            <person name="Coffey A.J."/>
            <person name="Scherer S."/>
            <person name="McLay K."/>
            <person name="Muzny D."/>
            <person name="Platzer M."/>
            <person name="Howell G.R."/>
            <person name="Burrows C."/>
            <person name="Bird C.P."/>
            <person name="Frankish A."/>
            <person name="Lovell F.L."/>
            <person name="Howe K.L."/>
            <person name="Ashurst J.L."/>
            <person name="Fulton R.S."/>
            <person name="Sudbrak R."/>
            <person name="Wen G."/>
            <person name="Jones M.C."/>
            <person name="Hurles M.E."/>
            <person name="Andrews T.D."/>
            <person name="Scott C.E."/>
            <person name="Searle S."/>
            <person name="Ramser J."/>
            <person name="Whittaker A."/>
            <person name="Deadman R."/>
            <person name="Carter N.P."/>
            <person name="Hunt S.E."/>
            <person name="Chen R."/>
            <person name="Cree A."/>
            <person name="Gunaratne P."/>
            <person name="Havlak P."/>
            <person name="Hodgson A."/>
            <person name="Metzker M.L."/>
            <person name="Richards S."/>
            <person name="Scott G."/>
            <person name="Steffen D."/>
            <person name="Sodergren E."/>
            <person name="Wheeler D.A."/>
            <person name="Worley K.C."/>
            <person name="Ainscough R."/>
            <person name="Ambrose K.D."/>
            <person name="Ansari-Lari M.A."/>
            <person name="Aradhya S."/>
            <person name="Ashwell R.I."/>
            <person name="Babbage A.K."/>
            <person name="Bagguley C.L."/>
            <person name="Ballabio A."/>
            <person name="Banerjee R."/>
            <person name="Barker G.E."/>
            <person name="Barlow K.F."/>
            <person name="Barrett I.P."/>
            <person name="Bates K.N."/>
            <person name="Beare D.M."/>
            <person name="Beasley H."/>
            <person name="Beasley O."/>
            <person name="Beck A."/>
            <person name="Bethel G."/>
            <person name="Blechschmidt K."/>
            <person name="Brady N."/>
            <person name="Bray-Allen S."/>
            <person name="Bridgeman A.M."/>
            <person name="Brown A.J."/>
            <person name="Brown M.J."/>
            <person name="Bonnin D."/>
            <person name="Bruford E.A."/>
            <person name="Buhay C."/>
            <person name="Burch P."/>
            <person name="Burford D."/>
            <person name="Burgess J."/>
            <person name="Burrill W."/>
            <person name="Burton J."/>
            <person name="Bye J.M."/>
            <person name="Carder C."/>
            <person name="Carrel L."/>
            <person name="Chako J."/>
            <person name="Chapman J.C."/>
            <person name="Chavez D."/>
            <person name="Chen E."/>
            <person name="Chen G."/>
            <person name="Chen Y."/>
            <person name="Chen Z."/>
            <person name="Chinault C."/>
            <person name="Ciccodicola A."/>
            <person name="Clark S.Y."/>
            <person name="Clarke G."/>
            <person name="Clee C.M."/>
            <person name="Clegg S."/>
            <person name="Clerc-Blankenburg K."/>
            <person name="Clifford K."/>
            <person name="Cobley V."/>
            <person name="Cole C.G."/>
            <person name="Conquer J.S."/>
            <person name="Corby N."/>
            <person name="Connor R.E."/>
            <person name="David R."/>
            <person name="Davies J."/>
            <person name="Davis C."/>
            <person name="Davis J."/>
            <person name="Delgado O."/>
            <person name="Deshazo D."/>
            <person name="Dhami P."/>
            <person name="Ding Y."/>
            <person name="Dinh H."/>
            <person name="Dodsworth S."/>
            <person name="Draper H."/>
            <person name="Dugan-Rocha S."/>
            <person name="Dunham A."/>
            <person name="Dunn M."/>
            <person name="Durbin K.J."/>
            <person name="Dutta I."/>
            <person name="Eades T."/>
            <person name="Ellwood M."/>
            <person name="Emery-Cohen A."/>
            <person name="Errington H."/>
            <person name="Evans K.L."/>
            <person name="Faulkner L."/>
            <person name="Francis F."/>
            <person name="Frankland J."/>
            <person name="Fraser A.E."/>
            <person name="Galgoczy P."/>
            <person name="Gilbert J."/>
            <person name="Gill R."/>
            <person name="Gloeckner G."/>
            <person name="Gregory S.G."/>
            <person name="Gribble S."/>
            <person name="Griffiths C."/>
            <person name="Grocock R."/>
            <person name="Gu Y."/>
            <person name="Gwilliam R."/>
            <person name="Hamilton C."/>
            <person name="Hart E.A."/>
            <person name="Hawes A."/>
            <person name="Heath P.D."/>
            <person name="Heitmann K."/>
            <person name="Hennig S."/>
            <person name="Hernandez J."/>
            <person name="Hinzmann B."/>
            <person name="Ho S."/>
            <person name="Hoffs M."/>
            <person name="Howden P.J."/>
            <person name="Huckle E.J."/>
            <person name="Hume J."/>
            <person name="Hunt P.J."/>
            <person name="Hunt A.R."/>
            <person name="Isherwood J."/>
            <person name="Jacob L."/>
            <person name="Johnson D."/>
            <person name="Jones S."/>
            <person name="de Jong P.J."/>
            <person name="Joseph S.S."/>
            <person name="Keenan S."/>
            <person name="Kelly S."/>
            <person name="Kershaw J.K."/>
            <person name="Khan Z."/>
            <person name="Kioschis P."/>
            <person name="Klages S."/>
            <person name="Knights A.J."/>
            <person name="Kosiura A."/>
            <person name="Kovar-Smith C."/>
            <person name="Laird G.K."/>
            <person name="Langford C."/>
            <person name="Lawlor S."/>
            <person name="Leversha M."/>
            <person name="Lewis L."/>
            <person name="Liu W."/>
            <person name="Lloyd C."/>
            <person name="Lloyd D.M."/>
            <person name="Loulseged H."/>
            <person name="Loveland J.E."/>
            <person name="Lovell J.D."/>
            <person name="Lozado R."/>
            <person name="Lu J."/>
            <person name="Lyne R."/>
            <person name="Ma J."/>
            <person name="Maheshwari M."/>
            <person name="Matthews L.H."/>
            <person name="McDowall J."/>
            <person name="McLaren S."/>
            <person name="McMurray A."/>
            <person name="Meidl P."/>
            <person name="Meitinger T."/>
            <person name="Milne S."/>
            <person name="Miner G."/>
            <person name="Mistry S.L."/>
            <person name="Morgan M."/>
            <person name="Morris S."/>
            <person name="Mueller I."/>
            <person name="Mullikin J.C."/>
            <person name="Nguyen N."/>
            <person name="Nordsiek G."/>
            <person name="Nyakatura G."/>
            <person name="O'dell C.N."/>
            <person name="Okwuonu G."/>
            <person name="Palmer S."/>
            <person name="Pandian R."/>
            <person name="Parker D."/>
            <person name="Parrish J."/>
            <person name="Pasternak S."/>
            <person name="Patel D."/>
            <person name="Pearce A.V."/>
            <person name="Pearson D.M."/>
            <person name="Pelan S.E."/>
            <person name="Perez L."/>
            <person name="Porter K.M."/>
            <person name="Ramsey Y."/>
            <person name="Reichwald K."/>
            <person name="Rhodes S."/>
            <person name="Ridler K.A."/>
            <person name="Schlessinger D."/>
            <person name="Schueler M.G."/>
            <person name="Sehra H.K."/>
            <person name="Shaw-Smith C."/>
            <person name="Shen H."/>
            <person name="Sheridan E.M."/>
            <person name="Shownkeen R."/>
            <person name="Skuce C.D."/>
            <person name="Smith M.L."/>
            <person name="Sotheran E.C."/>
            <person name="Steingruber H.E."/>
            <person name="Steward C.A."/>
            <person name="Storey R."/>
            <person name="Swann R.M."/>
            <person name="Swarbreck D."/>
            <person name="Tabor P.E."/>
            <person name="Taudien S."/>
            <person name="Taylor T."/>
            <person name="Teague B."/>
            <person name="Thomas K."/>
            <person name="Thorpe A."/>
            <person name="Timms K."/>
            <person name="Tracey A."/>
            <person name="Trevanion S."/>
            <person name="Tromans A.C."/>
            <person name="d'Urso M."/>
            <person name="Verduzco D."/>
            <person name="Villasana D."/>
            <person name="Waldron L."/>
            <person name="Wall M."/>
            <person name="Wang Q."/>
            <person name="Warren J."/>
            <person name="Warry G.L."/>
            <person name="Wei X."/>
            <person name="West A."/>
            <person name="Whitehead S.L."/>
            <person name="Whiteley M.N."/>
            <person name="Wilkinson J.E."/>
            <person name="Willey D.L."/>
            <person name="Williams G."/>
            <person name="Williams L."/>
            <person name="Williamson A."/>
            <person name="Williamson H."/>
            <person name="Wilming L."/>
            <person name="Woodmansey R.L."/>
            <person name="Wray P.W."/>
            <person name="Yen J."/>
            <person name="Zhang J."/>
            <person name="Zhou J."/>
            <person name="Zoghbi H."/>
            <person name="Zorilla S."/>
            <person name="Buck D."/>
            <person name="Reinhardt R."/>
            <person name="Poustka A."/>
            <person name="Rosenthal A."/>
            <person name="Lehrach H."/>
            <person name="Meindl A."/>
            <person name="Minx P.J."/>
            <person name="Hillier L.W."/>
            <person name="Willard H.F."/>
            <person name="Wilson R.K."/>
            <person name="Waterston R.H."/>
            <person name="Rice C.M."/>
            <person name="Vaudin M."/>
            <person name="Coulson A."/>
            <person name="Nelson D.L."/>
            <person name="Weinstock G."/>
            <person name="Sulston J.E."/>
            <person name="Durbin R.M."/>
            <person name="Hubbard T."/>
            <person name="Gibbs R.A."/>
            <person name="Beck S."/>
            <person name="Rogers J."/>
            <person name="Bentley D.R."/>
        </authorList>
    </citation>
    <scope>NUCLEOTIDE SEQUENCE [LARGE SCALE GENOMIC DNA]</scope>
</reference>
<reference key="4">
    <citation type="submission" date="2005-09" db="EMBL/GenBank/DDBJ databases">
        <authorList>
            <person name="Mural R.J."/>
            <person name="Istrail S."/>
            <person name="Sutton G.G."/>
            <person name="Florea L."/>
            <person name="Halpern A.L."/>
            <person name="Mobarry C.M."/>
            <person name="Lippert R."/>
            <person name="Walenz B."/>
            <person name="Shatkay H."/>
            <person name="Dew I."/>
            <person name="Miller J.R."/>
            <person name="Flanigan M.J."/>
            <person name="Edwards N.J."/>
            <person name="Bolanos R."/>
            <person name="Fasulo D."/>
            <person name="Halldorsson B.V."/>
            <person name="Hannenhalli S."/>
            <person name="Turner R."/>
            <person name="Yooseph S."/>
            <person name="Lu F."/>
            <person name="Nusskern D.R."/>
            <person name="Shue B.C."/>
            <person name="Zheng X.H."/>
            <person name="Zhong F."/>
            <person name="Delcher A.L."/>
            <person name="Huson D.H."/>
            <person name="Kravitz S.A."/>
            <person name="Mouchard L."/>
            <person name="Reinert K."/>
            <person name="Remington K.A."/>
            <person name="Clark A.G."/>
            <person name="Waterman M.S."/>
            <person name="Eichler E.E."/>
            <person name="Adams M.D."/>
            <person name="Hunkapiller M.W."/>
            <person name="Myers E.W."/>
            <person name="Venter J.C."/>
        </authorList>
    </citation>
    <scope>NUCLEOTIDE SEQUENCE [LARGE SCALE GENOMIC DNA]</scope>
</reference>
<reference key="5">
    <citation type="journal article" date="2004" name="Genome Res.">
        <title>The status, quality, and expansion of the NIH full-length cDNA project: the Mammalian Gene Collection (MGC).</title>
        <authorList>
            <consortium name="The MGC Project Team"/>
        </authorList>
    </citation>
    <scope>NUCLEOTIDE SEQUENCE [LARGE SCALE MRNA]</scope>
    <source>
        <tissue>Brain</tissue>
    </source>
</reference>
<evidence type="ECO:0000250" key="1"/>
<evidence type="ECO:0000255" key="2"/>
<evidence type="ECO:0000269" key="3">
    <source>
    </source>
</evidence>
<evidence type="ECO:0000269" key="4">
    <source>
    </source>
</evidence>
<evidence type="ECO:0000305" key="5"/>
<accession>Q9GZU5</accession>
<accession>D3DWC0</accession>
<accession>Q2M1S4</accession>
<accession>Q5H983</accession>
<accession>Q9H4J0</accession>